<accession>O79660</accession>
<organism>
    <name type="scientific">Tragopan temminckii</name>
    <name type="common">Temminck's tragopan</name>
    <name type="synonym">Satyra temminckii</name>
    <dbReference type="NCBI Taxonomy" id="9071"/>
    <lineage>
        <taxon>Eukaryota</taxon>
        <taxon>Metazoa</taxon>
        <taxon>Chordata</taxon>
        <taxon>Craniata</taxon>
        <taxon>Vertebrata</taxon>
        <taxon>Euteleostomi</taxon>
        <taxon>Archelosauria</taxon>
        <taxon>Archosauria</taxon>
        <taxon>Dinosauria</taxon>
        <taxon>Saurischia</taxon>
        <taxon>Theropoda</taxon>
        <taxon>Coelurosauria</taxon>
        <taxon>Aves</taxon>
        <taxon>Neognathae</taxon>
        <taxon>Galloanserae</taxon>
        <taxon>Galliformes</taxon>
        <taxon>Phasianidae</taxon>
        <taxon>Phasianinae</taxon>
        <taxon>Tragopan</taxon>
    </lineage>
</organism>
<geneLocation type="mitochondrion"/>
<sequence length="380" mass="42409">MAPNIRKSHPLLKMINNSLIDLPAPSNISAWWNFGSLLAMCLATQILTGLLLAMHYTADTTLAFSSVAHTCRNVQYGWLIRNLHANGASFFFICIFLHIGRGLYYGSYLYKETWNTGVILLLTLMATAFVGYVLPWGQMSFGGATVITNLFSAIPYIGQALVEWAWGGFSVDNPTLTRFFALHFLLPFVIAGITIIHLIFLHESGSNNPLGISSNSDKIPFHPYYSLKDILGLTLMLTPLLTLALFSPNLLGDPENFTPANPLVTPPHIKPEWYFLFAYAILRSIPNKLGGVLALAASVLILLLIPFLHKSKQRTMTFRPLSQTLFWLLVANLLVLTWVGSQPVEHPFIIIGQMASFSYFTILLILFPMTSTLENKMFNH</sequence>
<evidence type="ECO:0000250" key="1"/>
<evidence type="ECO:0000250" key="2">
    <source>
        <dbReference type="UniProtKB" id="P00157"/>
    </source>
</evidence>
<evidence type="ECO:0000255" key="3">
    <source>
        <dbReference type="PROSITE-ProRule" id="PRU00967"/>
    </source>
</evidence>
<evidence type="ECO:0000255" key="4">
    <source>
        <dbReference type="PROSITE-ProRule" id="PRU00968"/>
    </source>
</evidence>
<keyword id="KW-0249">Electron transport</keyword>
<keyword id="KW-0349">Heme</keyword>
<keyword id="KW-0408">Iron</keyword>
<keyword id="KW-0472">Membrane</keyword>
<keyword id="KW-0479">Metal-binding</keyword>
<keyword id="KW-0496">Mitochondrion</keyword>
<keyword id="KW-0999">Mitochondrion inner membrane</keyword>
<keyword id="KW-0679">Respiratory chain</keyword>
<keyword id="KW-0812">Transmembrane</keyword>
<keyword id="KW-1133">Transmembrane helix</keyword>
<keyword id="KW-0813">Transport</keyword>
<keyword id="KW-0830">Ubiquinone</keyword>
<dbReference type="EMBL" id="AF028802">
    <property type="protein sequence ID" value="AAC62192.1"/>
    <property type="molecule type" value="Genomic_DNA"/>
</dbReference>
<dbReference type="SMR" id="O79660"/>
<dbReference type="GO" id="GO:0005743">
    <property type="term" value="C:mitochondrial inner membrane"/>
    <property type="evidence" value="ECO:0007669"/>
    <property type="project" value="UniProtKB-SubCell"/>
</dbReference>
<dbReference type="GO" id="GO:0045275">
    <property type="term" value="C:respiratory chain complex III"/>
    <property type="evidence" value="ECO:0007669"/>
    <property type="project" value="InterPro"/>
</dbReference>
<dbReference type="GO" id="GO:0046872">
    <property type="term" value="F:metal ion binding"/>
    <property type="evidence" value="ECO:0007669"/>
    <property type="project" value="UniProtKB-KW"/>
</dbReference>
<dbReference type="GO" id="GO:0008121">
    <property type="term" value="F:ubiquinol-cytochrome-c reductase activity"/>
    <property type="evidence" value="ECO:0007669"/>
    <property type="project" value="InterPro"/>
</dbReference>
<dbReference type="GO" id="GO:0006122">
    <property type="term" value="P:mitochondrial electron transport, ubiquinol to cytochrome c"/>
    <property type="evidence" value="ECO:0007669"/>
    <property type="project" value="TreeGrafter"/>
</dbReference>
<dbReference type="CDD" id="cd00290">
    <property type="entry name" value="cytochrome_b_C"/>
    <property type="match status" value="1"/>
</dbReference>
<dbReference type="CDD" id="cd00284">
    <property type="entry name" value="Cytochrome_b_N"/>
    <property type="match status" value="1"/>
</dbReference>
<dbReference type="FunFam" id="1.20.810.10:FF:000002">
    <property type="entry name" value="Cytochrome b"/>
    <property type="match status" value="1"/>
</dbReference>
<dbReference type="Gene3D" id="1.20.810.10">
    <property type="entry name" value="Cytochrome Bc1 Complex, Chain C"/>
    <property type="match status" value="1"/>
</dbReference>
<dbReference type="InterPro" id="IPR005798">
    <property type="entry name" value="Cyt_b/b6_C"/>
</dbReference>
<dbReference type="InterPro" id="IPR036150">
    <property type="entry name" value="Cyt_b/b6_C_sf"/>
</dbReference>
<dbReference type="InterPro" id="IPR005797">
    <property type="entry name" value="Cyt_b/b6_N"/>
</dbReference>
<dbReference type="InterPro" id="IPR027387">
    <property type="entry name" value="Cytb/b6-like_sf"/>
</dbReference>
<dbReference type="InterPro" id="IPR030689">
    <property type="entry name" value="Cytochrome_b"/>
</dbReference>
<dbReference type="InterPro" id="IPR048260">
    <property type="entry name" value="Cytochrome_b_C_euk/bac"/>
</dbReference>
<dbReference type="InterPro" id="IPR048259">
    <property type="entry name" value="Cytochrome_b_N_euk/bac"/>
</dbReference>
<dbReference type="InterPro" id="IPR016174">
    <property type="entry name" value="Di-haem_cyt_TM"/>
</dbReference>
<dbReference type="PANTHER" id="PTHR19271">
    <property type="entry name" value="CYTOCHROME B"/>
    <property type="match status" value="1"/>
</dbReference>
<dbReference type="PANTHER" id="PTHR19271:SF16">
    <property type="entry name" value="CYTOCHROME B"/>
    <property type="match status" value="1"/>
</dbReference>
<dbReference type="Pfam" id="PF00032">
    <property type="entry name" value="Cytochrom_B_C"/>
    <property type="match status" value="1"/>
</dbReference>
<dbReference type="Pfam" id="PF00033">
    <property type="entry name" value="Cytochrome_B"/>
    <property type="match status" value="1"/>
</dbReference>
<dbReference type="PIRSF" id="PIRSF038885">
    <property type="entry name" value="COB"/>
    <property type="match status" value="1"/>
</dbReference>
<dbReference type="SUPFAM" id="SSF81648">
    <property type="entry name" value="a domain/subunit of cytochrome bc1 complex (Ubiquinol-cytochrome c reductase)"/>
    <property type="match status" value="1"/>
</dbReference>
<dbReference type="SUPFAM" id="SSF81342">
    <property type="entry name" value="Transmembrane di-heme cytochromes"/>
    <property type="match status" value="1"/>
</dbReference>
<dbReference type="PROSITE" id="PS51003">
    <property type="entry name" value="CYTB_CTER"/>
    <property type="match status" value="1"/>
</dbReference>
<dbReference type="PROSITE" id="PS51002">
    <property type="entry name" value="CYTB_NTER"/>
    <property type="match status" value="1"/>
</dbReference>
<name>CYB_TRATE</name>
<protein>
    <recommendedName>
        <fullName>Cytochrome b</fullName>
    </recommendedName>
    <alternativeName>
        <fullName>Complex III subunit 3</fullName>
    </alternativeName>
    <alternativeName>
        <fullName>Complex III subunit III</fullName>
    </alternativeName>
    <alternativeName>
        <fullName>Cytochrome b-c1 complex subunit 3</fullName>
    </alternativeName>
    <alternativeName>
        <fullName>Ubiquinol-cytochrome-c reductase complex cytochrome b subunit</fullName>
    </alternativeName>
</protein>
<feature type="chain" id="PRO_0000061683" description="Cytochrome b">
    <location>
        <begin position="1"/>
        <end position="380"/>
    </location>
</feature>
<feature type="transmembrane region" description="Helical" evidence="2">
    <location>
        <begin position="34"/>
        <end position="54"/>
    </location>
</feature>
<feature type="transmembrane region" description="Helical" evidence="2">
    <location>
        <begin position="78"/>
        <end position="99"/>
    </location>
</feature>
<feature type="transmembrane region" description="Helical" evidence="2">
    <location>
        <begin position="114"/>
        <end position="134"/>
    </location>
</feature>
<feature type="transmembrane region" description="Helical" evidence="2">
    <location>
        <begin position="179"/>
        <end position="199"/>
    </location>
</feature>
<feature type="transmembrane region" description="Helical" evidence="2">
    <location>
        <begin position="227"/>
        <end position="247"/>
    </location>
</feature>
<feature type="transmembrane region" description="Helical" evidence="2">
    <location>
        <begin position="289"/>
        <end position="309"/>
    </location>
</feature>
<feature type="transmembrane region" description="Helical" evidence="2">
    <location>
        <begin position="321"/>
        <end position="341"/>
    </location>
</feature>
<feature type="transmembrane region" description="Helical" evidence="2">
    <location>
        <begin position="348"/>
        <end position="368"/>
    </location>
</feature>
<feature type="binding site" description="axial binding residue" evidence="2">
    <location>
        <position position="84"/>
    </location>
    <ligand>
        <name>heme b</name>
        <dbReference type="ChEBI" id="CHEBI:60344"/>
        <label>b562</label>
    </ligand>
    <ligandPart>
        <name>Fe</name>
        <dbReference type="ChEBI" id="CHEBI:18248"/>
    </ligandPart>
</feature>
<feature type="binding site" description="axial binding residue" evidence="2">
    <location>
        <position position="98"/>
    </location>
    <ligand>
        <name>heme b</name>
        <dbReference type="ChEBI" id="CHEBI:60344"/>
        <label>b566</label>
    </ligand>
    <ligandPart>
        <name>Fe</name>
        <dbReference type="ChEBI" id="CHEBI:18248"/>
    </ligandPart>
</feature>
<feature type="binding site" description="axial binding residue" evidence="2">
    <location>
        <position position="183"/>
    </location>
    <ligand>
        <name>heme b</name>
        <dbReference type="ChEBI" id="CHEBI:60344"/>
        <label>b562</label>
    </ligand>
    <ligandPart>
        <name>Fe</name>
        <dbReference type="ChEBI" id="CHEBI:18248"/>
    </ligandPart>
</feature>
<feature type="binding site" description="axial binding residue" evidence="2">
    <location>
        <position position="197"/>
    </location>
    <ligand>
        <name>heme b</name>
        <dbReference type="ChEBI" id="CHEBI:60344"/>
        <label>b566</label>
    </ligand>
    <ligandPart>
        <name>Fe</name>
        <dbReference type="ChEBI" id="CHEBI:18248"/>
    </ligandPart>
</feature>
<feature type="binding site" evidence="2">
    <location>
        <position position="202"/>
    </location>
    <ligand>
        <name>a ubiquinone</name>
        <dbReference type="ChEBI" id="CHEBI:16389"/>
    </ligand>
</feature>
<reference key="1">
    <citation type="journal article" date="1999" name="Mol. Phylogenet. Evol.">
        <title>A molecular phylogeny of the pheasants and partridges suggests that these lineages are not monophyletic.</title>
        <authorList>
            <person name="Kimball R.T."/>
            <person name="Braun E.L."/>
            <person name="Zwartjes P.W."/>
            <person name="Crowe T.M."/>
            <person name="Ligon J.D."/>
        </authorList>
    </citation>
    <scope>NUCLEOTIDE SEQUENCE [GENOMIC DNA]</scope>
</reference>
<proteinExistence type="inferred from homology"/>
<comment type="function">
    <text evidence="2">Component of the ubiquinol-cytochrome c reductase complex (complex III or cytochrome b-c1 complex) that is part of the mitochondrial respiratory chain. The b-c1 complex mediates electron transfer from ubiquinol to cytochrome c. Contributes to the generation of a proton gradient across the mitochondrial membrane that is then used for ATP synthesis.</text>
</comment>
<comment type="cofactor">
    <cofactor evidence="2">
        <name>heme b</name>
        <dbReference type="ChEBI" id="CHEBI:60344"/>
    </cofactor>
    <text evidence="2">Binds 2 heme b groups non-covalently.</text>
</comment>
<comment type="subunit">
    <text evidence="2">The cytochrome bc1 complex contains 11 subunits: 3 respiratory subunits (MT-CYB, CYC1 and UQCRFS1), 2 core proteins (UQCRC1 and UQCRC2) and 6 low-molecular weight proteins (UQCRH/QCR6, UQCRB/QCR7, UQCRQ/QCR8, UQCR10/QCR9, UQCR11/QCR10 and a cleavage product of UQCRFS1). This cytochrome bc1 complex then forms a dimer.</text>
</comment>
<comment type="subcellular location">
    <subcellularLocation>
        <location evidence="2">Mitochondrion inner membrane</location>
        <topology evidence="2">Multi-pass membrane protein</topology>
    </subcellularLocation>
</comment>
<comment type="miscellaneous">
    <text evidence="1">Heme 1 (or BL or b562) is low-potential and absorbs at about 562 nm, and heme 2 (or BH or b566) is high-potential and absorbs at about 566 nm.</text>
</comment>
<comment type="similarity">
    <text evidence="3 4">Belongs to the cytochrome b family.</text>
</comment>
<comment type="caution">
    <text evidence="2">The full-length protein contains only eight transmembrane helices, not nine as predicted by bioinformatics tools.</text>
</comment>
<gene>
    <name type="primary">MT-CYB</name>
    <name type="synonym">COB</name>
    <name type="synonym">CYTB</name>
    <name type="synonym">MTCYB</name>
</gene>